<accession>I6S390</accession>
<organism>
    <name type="scientific">Scolopendra mutilans</name>
    <name type="common">Chinese red-headed centipede</name>
    <name type="synonym">Scolopendra subspinipes mutilans</name>
    <dbReference type="NCBI Taxonomy" id="2836329"/>
    <lineage>
        <taxon>Eukaryota</taxon>
        <taxon>Metazoa</taxon>
        <taxon>Ecdysozoa</taxon>
        <taxon>Arthropoda</taxon>
        <taxon>Myriapoda</taxon>
        <taxon>Chilopoda</taxon>
        <taxon>Pleurostigmophora</taxon>
        <taxon>Scolopendromorpha</taxon>
        <taxon>Scolopendridae</taxon>
        <taxon>Scolopendra</taxon>
    </lineage>
</organism>
<reference key="1">
    <citation type="journal article" date="2012" name="Mol. Cell. Proteomics">
        <title>Chemical punch packed in venoms makes centipedes excellent predators.</title>
        <authorList>
            <person name="Yang S."/>
            <person name="Liu Z."/>
            <person name="Xiao Y."/>
            <person name="Li Y."/>
            <person name="Rong M."/>
            <person name="Liang S."/>
            <person name="Zhang Z."/>
            <person name="Yu H."/>
            <person name="King G.F."/>
            <person name="Lai R."/>
        </authorList>
    </citation>
    <scope>NUCLEOTIDE SEQUENCE [MRNA]</scope>
    <scope>PROTEIN SEQUENCE OF 23-76</scope>
    <scope>MASS SPECTROMETRY</scope>
    <scope>FUNCTION</scope>
    <scope>SUBCELLULAR LOCATION</scope>
    <source>
        <tissue>Venom</tissue>
        <tissue>Venom gland</tissue>
    </source>
</reference>
<reference key="2">
    <citation type="journal article" date="2014" name="Mol. Biol. Evol.">
        <title>Clawing through evolution: toxin diversification and convergence in the ancient lineage Chilopoda (centipedes).</title>
        <authorList>
            <person name="Undheim E.A."/>
            <person name="Jones A."/>
            <person name="Clauser K.R."/>
            <person name="Holland J.W."/>
            <person name="Pineda S.S."/>
            <person name="King G.F."/>
            <person name="Fry B.G."/>
        </authorList>
    </citation>
    <scope>NOMENCLATURE</scope>
</reference>
<dbReference type="EMBL" id="JN646118">
    <property type="protein sequence ID" value="AFM55007.1"/>
    <property type="molecule type" value="mRNA"/>
</dbReference>
<dbReference type="GO" id="GO:0005576">
    <property type="term" value="C:extracellular region"/>
    <property type="evidence" value="ECO:0007669"/>
    <property type="project" value="UniProtKB-SubCell"/>
</dbReference>
<dbReference type="GO" id="GO:0005246">
    <property type="term" value="F:calcium channel regulator activity"/>
    <property type="evidence" value="ECO:0007669"/>
    <property type="project" value="UniProtKB-KW"/>
</dbReference>
<dbReference type="GO" id="GO:0090729">
    <property type="term" value="F:toxin activity"/>
    <property type="evidence" value="ECO:0007669"/>
    <property type="project" value="UniProtKB-KW"/>
</dbReference>
<sequence>MAYIYALIFAIVVCMNTDVIQAEESQHDTLENVEYRLSCIPKGGECERMADTCCPGLQCLGCNPFNKENLGKCKCQ</sequence>
<feature type="signal peptide" evidence="1">
    <location>
        <begin position="1"/>
        <end position="22"/>
    </location>
</feature>
<feature type="chain" id="PRO_0000425466" description="Omega-scoloptoxin(13)-Ssm2a" evidence="1">
    <location>
        <begin position="23"/>
        <end position="76"/>
    </location>
</feature>
<keyword id="KW-0108">Calcium channel impairing toxin</keyword>
<keyword id="KW-0903">Direct protein sequencing</keyword>
<keyword id="KW-1015">Disulfide bond</keyword>
<keyword id="KW-0872">Ion channel impairing toxin</keyword>
<keyword id="KW-0528">Neurotoxin</keyword>
<keyword id="KW-0964">Secreted</keyword>
<keyword id="KW-0732">Signal</keyword>
<keyword id="KW-0800">Toxin</keyword>
<keyword id="KW-1218">Voltage-gated calcium channel impairing toxin</keyword>
<name>TXD2A_SCOMU</name>
<proteinExistence type="evidence at protein level"/>
<evidence type="ECO:0000269" key="1">
    <source>
    </source>
</evidence>
<evidence type="ECO:0000303" key="2">
    <source>
    </source>
</evidence>
<evidence type="ECO:0000303" key="3">
    <source>
    </source>
</evidence>
<evidence type="ECO:0000305" key="4"/>
<evidence type="ECO:0000305" key="5">
    <source>
    </source>
</evidence>
<protein>
    <recommendedName>
        <fullName evidence="3">Omega-scoloptoxin(13)-Ssm2a</fullName>
        <shortName evidence="3">Omega-SLPTX(13)-Ssm2a</shortName>
    </recommendedName>
    <alternativeName>
        <fullName evidence="2">Omega-scoloptoxin-Ssm2a</fullName>
        <shortName evidence="2">Omega-SLPTX-Ssm2a</shortName>
    </alternativeName>
</protein>
<comment type="function">
    <text evidence="1">Inhibits voltage-gated calcium channel (Cav) currents in DRG neurons (IC(50)=1590 nM).</text>
</comment>
<comment type="subcellular location">
    <subcellularLocation>
        <location evidence="1">Secreted</location>
    </subcellularLocation>
</comment>
<comment type="tissue specificity">
    <text evidence="5">Expressed by the venom gland.</text>
</comment>
<comment type="PTM">
    <text evidence="4">Contains 4 disulfide bonds.</text>
</comment>
<comment type="mass spectrometry"/>
<comment type="similarity">
    <text evidence="4">Belongs to the scoloptoxin-13 family.</text>
</comment>